<reference key="1">
    <citation type="journal article" date="2002" name="Proc. Natl. Acad. Sci. U.S.A.">
        <title>Extensive mosaic structure revealed by the complete genome sequence of uropathogenic Escherichia coli.</title>
        <authorList>
            <person name="Welch R.A."/>
            <person name="Burland V."/>
            <person name="Plunkett G. III"/>
            <person name="Redford P."/>
            <person name="Roesch P."/>
            <person name="Rasko D."/>
            <person name="Buckles E.L."/>
            <person name="Liou S.-R."/>
            <person name="Boutin A."/>
            <person name="Hackett J."/>
            <person name="Stroud D."/>
            <person name="Mayhew G.F."/>
            <person name="Rose D.J."/>
            <person name="Zhou S."/>
            <person name="Schwartz D.C."/>
            <person name="Perna N.T."/>
            <person name="Mobley H.L.T."/>
            <person name="Donnenberg M.S."/>
            <person name="Blattner F.R."/>
        </authorList>
    </citation>
    <scope>NUCLEOTIDE SEQUENCE [LARGE SCALE GENOMIC DNA]</scope>
    <source>
        <strain>CFT073 / ATCC 700928 / UPEC</strain>
    </source>
</reference>
<proteinExistence type="inferred from homology"/>
<organism>
    <name type="scientific">Escherichia coli O6:H1 (strain CFT073 / ATCC 700928 / UPEC)</name>
    <dbReference type="NCBI Taxonomy" id="199310"/>
    <lineage>
        <taxon>Bacteria</taxon>
        <taxon>Pseudomonadati</taxon>
        <taxon>Pseudomonadota</taxon>
        <taxon>Gammaproteobacteria</taxon>
        <taxon>Enterobacterales</taxon>
        <taxon>Enterobacteriaceae</taxon>
        <taxon>Escherichia</taxon>
    </lineage>
</organism>
<protein>
    <recommendedName>
        <fullName evidence="2">Carnitinyl-CoA dehydratase</fullName>
        <ecNumber evidence="2">4.2.1.149</ecNumber>
    </recommendedName>
    <alternativeName>
        <fullName evidence="2">Crotonobetainyl-CoA hydratase</fullName>
    </alternativeName>
</protein>
<name>CAID_ECOL6</name>
<comment type="function">
    <text evidence="2">Catalyzes the reversible dehydration of L-carnitinyl-CoA to crotonobetainyl-CoA.</text>
</comment>
<comment type="catalytic activity">
    <reaction evidence="2">
        <text>(R)-carnitinyl-CoA = crotonobetainyl-CoA + H2O</text>
        <dbReference type="Rhea" id="RHEA:28338"/>
        <dbReference type="ChEBI" id="CHEBI:15377"/>
        <dbReference type="ChEBI" id="CHEBI:60932"/>
        <dbReference type="ChEBI" id="CHEBI:60933"/>
        <dbReference type="EC" id="4.2.1.149"/>
    </reaction>
</comment>
<comment type="pathway">
    <text evidence="2">Amine and polyamine metabolism; carnitine metabolism.</text>
</comment>
<comment type="similarity">
    <text evidence="2">Belongs to the enoyl-CoA hydratase/isomerase family.</text>
</comment>
<comment type="sequence caution" evidence="3">
    <conflict type="erroneous initiation">
        <sequence resource="EMBL-CDS" id="AAN78543"/>
    </conflict>
</comment>
<accession>Q8FLA6</accession>
<feature type="initiator methionine" description="Removed" evidence="1">
    <location>
        <position position="1"/>
    </location>
</feature>
<feature type="chain" id="PRO_0000109349" description="Carnitinyl-CoA dehydratase">
    <location>
        <begin position="2"/>
        <end position="261"/>
    </location>
</feature>
<feature type="active site" description="Nucleophile" evidence="2">
    <location>
        <position position="111"/>
    </location>
</feature>
<feature type="active site" description="Proton acceptor" evidence="2">
    <location>
        <position position="131"/>
    </location>
</feature>
<dbReference type="EC" id="4.2.1.149" evidence="2"/>
<dbReference type="EMBL" id="AE014075">
    <property type="protein sequence ID" value="AAN78543.1"/>
    <property type="status" value="ALT_INIT"/>
    <property type="molecule type" value="Genomic_DNA"/>
</dbReference>
<dbReference type="RefSeq" id="WP_000004399.1">
    <property type="nucleotide sequence ID" value="NZ_CP051263.1"/>
</dbReference>
<dbReference type="SMR" id="Q8FLA6"/>
<dbReference type="STRING" id="199310.c0045"/>
<dbReference type="KEGG" id="ecc:c0045"/>
<dbReference type="eggNOG" id="COG1024">
    <property type="taxonomic scope" value="Bacteria"/>
</dbReference>
<dbReference type="HOGENOM" id="CLU_009834_7_6_6"/>
<dbReference type="UniPathway" id="UPA00117"/>
<dbReference type="Proteomes" id="UP000001410">
    <property type="component" value="Chromosome"/>
</dbReference>
<dbReference type="GO" id="GO:0016836">
    <property type="term" value="F:hydro-lyase activity"/>
    <property type="evidence" value="ECO:0007669"/>
    <property type="project" value="UniProtKB-UniRule"/>
</dbReference>
<dbReference type="GO" id="GO:0008735">
    <property type="term" value="F:L-carnitine CoA-transferase activity"/>
    <property type="evidence" value="ECO:0007669"/>
    <property type="project" value="RHEA"/>
</dbReference>
<dbReference type="GO" id="GO:0009437">
    <property type="term" value="P:carnitine metabolic process"/>
    <property type="evidence" value="ECO:0007669"/>
    <property type="project" value="UniProtKB-UniRule"/>
</dbReference>
<dbReference type="GO" id="GO:0006635">
    <property type="term" value="P:fatty acid beta-oxidation"/>
    <property type="evidence" value="ECO:0007669"/>
    <property type="project" value="TreeGrafter"/>
</dbReference>
<dbReference type="CDD" id="cd06558">
    <property type="entry name" value="crotonase-like"/>
    <property type="match status" value="1"/>
</dbReference>
<dbReference type="FunFam" id="1.10.12.10:FF:000005">
    <property type="entry name" value="Carnitinyl-CoA dehydratase"/>
    <property type="match status" value="1"/>
</dbReference>
<dbReference type="FunFam" id="3.90.226.10:FF:000009">
    <property type="entry name" value="Carnitinyl-CoA dehydratase"/>
    <property type="match status" value="1"/>
</dbReference>
<dbReference type="Gene3D" id="3.90.226.10">
    <property type="entry name" value="2-enoyl-CoA Hydratase, Chain A, domain 1"/>
    <property type="match status" value="1"/>
</dbReference>
<dbReference type="Gene3D" id="1.10.12.10">
    <property type="entry name" value="Lyase 2-enoyl-coa Hydratase, Chain A, domain 2"/>
    <property type="match status" value="1"/>
</dbReference>
<dbReference type="HAMAP" id="MF_01051">
    <property type="entry name" value="CaiD"/>
    <property type="match status" value="1"/>
</dbReference>
<dbReference type="InterPro" id="IPR022852">
    <property type="entry name" value="Carnitinyl_CoA_dehydratase"/>
</dbReference>
<dbReference type="InterPro" id="IPR029045">
    <property type="entry name" value="ClpP/crotonase-like_dom_sf"/>
</dbReference>
<dbReference type="InterPro" id="IPR018376">
    <property type="entry name" value="Enoyl-CoA_hyd/isom_CS"/>
</dbReference>
<dbReference type="InterPro" id="IPR001753">
    <property type="entry name" value="Enoyl-CoA_hydra/iso"/>
</dbReference>
<dbReference type="InterPro" id="IPR014748">
    <property type="entry name" value="Enoyl-CoA_hydra_C"/>
</dbReference>
<dbReference type="NCBIfam" id="NF002936">
    <property type="entry name" value="PRK03580.1"/>
    <property type="match status" value="1"/>
</dbReference>
<dbReference type="PANTHER" id="PTHR11941:SF54">
    <property type="entry name" value="ENOYL-COA HYDRATASE, MITOCHONDRIAL"/>
    <property type="match status" value="1"/>
</dbReference>
<dbReference type="PANTHER" id="PTHR11941">
    <property type="entry name" value="ENOYL-COA HYDRATASE-RELATED"/>
    <property type="match status" value="1"/>
</dbReference>
<dbReference type="Pfam" id="PF00378">
    <property type="entry name" value="ECH_1"/>
    <property type="match status" value="1"/>
</dbReference>
<dbReference type="SUPFAM" id="SSF52096">
    <property type="entry name" value="ClpP/crotonase"/>
    <property type="match status" value="1"/>
</dbReference>
<dbReference type="PROSITE" id="PS00166">
    <property type="entry name" value="ENOYL_COA_HYDRATASE"/>
    <property type="match status" value="1"/>
</dbReference>
<gene>
    <name evidence="2" type="primary">caiD</name>
    <name type="ordered locus">c0045</name>
</gene>
<evidence type="ECO:0000250" key="1"/>
<evidence type="ECO:0000255" key="2">
    <source>
        <dbReference type="HAMAP-Rule" id="MF_01051"/>
    </source>
</evidence>
<evidence type="ECO:0000305" key="3"/>
<keyword id="KW-0456">Lyase</keyword>
<keyword id="KW-1185">Reference proteome</keyword>
<sequence length="261" mass="28176">MSESLHLTRNGSILEITLDRPKANAIDAKTSFEMGEVFLNFRDDPQLRVAIITGAGEKFFSAGWDLKAAAEGEAPDADFGPGGFAGLTEIFNLDKPVIAAVNGYAFGGGFELALAADFIVCADNASFALPEAKLGIVPDSGGVLRLPKILPPAIVNEMVMTGRRMGAEEALRWGVVNRVVSQAELMDNARELAQQLVNSAPLAIAALKEIYRTTSEMPVEEAYRYIRSGVLKHYPSVLHSEDAIEGPLAFAEKRDPVWKGR</sequence>